<proteinExistence type="inferred from homology"/>
<name>FENR1_LYSSC</name>
<evidence type="ECO:0000255" key="1">
    <source>
        <dbReference type="HAMAP-Rule" id="MF_01685"/>
    </source>
</evidence>
<evidence type="ECO:0000305" key="2"/>
<keyword id="KW-0274">FAD</keyword>
<keyword id="KW-0285">Flavoprotein</keyword>
<keyword id="KW-0521">NADP</keyword>
<keyword id="KW-0560">Oxidoreductase</keyword>
<sequence>MFEQEMYDVTIIGGGPAGLYSSFYCGLREMKTKLIESQPQLGGKIHVYPEKMIWDIGGVTPISGGQLIKQLVEQALTFNPSIYTDEKVLSIAKNDEGIFVITAESGNIHYSKTVIVAIGGGILNPQKIEIEGAERFEVSNLNYTIKSYEKFKNKAVIISGGGNTAVDWALELMEVASKVYLTYRKDQLSAHEAQITELTNSAIECHYNSEITKLIADDQEGMIKAIALTNHETGTITEIPIDEVVISHGYVRDKELLDNSPLAIERKNDYFIAGTINSESSIPGLYAAGDILHHDGKIHLIAAAFHDALHAVNSAKKYIQPDASDGGIVSSHNDIFKQRNRKLLQESLK</sequence>
<protein>
    <recommendedName>
        <fullName evidence="1">Ferredoxin--NADP reductase 1</fullName>
        <shortName evidence="1">FNR 1</shortName>
        <shortName evidence="1">Fd-NADP(+) reductase 1</shortName>
        <ecNumber evidence="1">1.18.1.2</ecNumber>
    </recommendedName>
</protein>
<accession>B1HZ05</accession>
<comment type="catalytic activity">
    <reaction evidence="1">
        <text>2 reduced [2Fe-2S]-[ferredoxin] + NADP(+) + H(+) = 2 oxidized [2Fe-2S]-[ferredoxin] + NADPH</text>
        <dbReference type="Rhea" id="RHEA:20125"/>
        <dbReference type="Rhea" id="RHEA-COMP:10000"/>
        <dbReference type="Rhea" id="RHEA-COMP:10001"/>
        <dbReference type="ChEBI" id="CHEBI:15378"/>
        <dbReference type="ChEBI" id="CHEBI:33737"/>
        <dbReference type="ChEBI" id="CHEBI:33738"/>
        <dbReference type="ChEBI" id="CHEBI:57783"/>
        <dbReference type="ChEBI" id="CHEBI:58349"/>
        <dbReference type="EC" id="1.18.1.2"/>
    </reaction>
</comment>
<comment type="cofactor">
    <cofactor evidence="1">
        <name>FAD</name>
        <dbReference type="ChEBI" id="CHEBI:57692"/>
    </cofactor>
    <text evidence="1">Binds 1 FAD per subunit.</text>
</comment>
<comment type="subunit">
    <text evidence="1">Homodimer.</text>
</comment>
<comment type="similarity">
    <text evidence="1">Belongs to the ferredoxin--NADP reductase type 2 family.</text>
</comment>
<comment type="sequence caution" evidence="2">
    <conflict type="erroneous initiation">
        <sequence resource="EMBL-CDS" id="ACA38405"/>
    </conflict>
</comment>
<gene>
    <name type="ordered locus">Bsph_0789</name>
</gene>
<organism>
    <name type="scientific">Lysinibacillus sphaericus (strain C3-41)</name>
    <dbReference type="NCBI Taxonomy" id="444177"/>
    <lineage>
        <taxon>Bacteria</taxon>
        <taxon>Bacillati</taxon>
        <taxon>Bacillota</taxon>
        <taxon>Bacilli</taxon>
        <taxon>Bacillales</taxon>
        <taxon>Bacillaceae</taxon>
        <taxon>Lysinibacillus</taxon>
    </lineage>
</organism>
<reference key="1">
    <citation type="journal article" date="2008" name="J. Bacteriol.">
        <title>Complete genome sequence of the mosquitocidal bacterium Bacillus sphaericus C3-41 and comparison with those of closely related Bacillus species.</title>
        <authorList>
            <person name="Hu X."/>
            <person name="Fan W."/>
            <person name="Han B."/>
            <person name="Liu H."/>
            <person name="Zheng D."/>
            <person name="Li Q."/>
            <person name="Dong W."/>
            <person name="Yan J."/>
            <person name="Gao M."/>
            <person name="Berry C."/>
            <person name="Yuan Z."/>
        </authorList>
    </citation>
    <scope>NUCLEOTIDE SEQUENCE [LARGE SCALE GENOMIC DNA]</scope>
    <source>
        <strain>C3-41</strain>
    </source>
</reference>
<feature type="chain" id="PRO_0000364877" description="Ferredoxin--NADP reductase 1">
    <location>
        <begin position="1"/>
        <end position="349"/>
    </location>
</feature>
<feature type="binding site" evidence="1">
    <location>
        <position position="36"/>
    </location>
    <ligand>
        <name>FAD</name>
        <dbReference type="ChEBI" id="CHEBI:57692"/>
    </ligand>
</feature>
<feature type="binding site" evidence="1">
    <location>
        <position position="44"/>
    </location>
    <ligand>
        <name>FAD</name>
        <dbReference type="ChEBI" id="CHEBI:57692"/>
    </ligand>
</feature>
<feature type="binding site" evidence="1">
    <location>
        <position position="48"/>
    </location>
    <ligand>
        <name>FAD</name>
        <dbReference type="ChEBI" id="CHEBI:57692"/>
    </ligand>
</feature>
<feature type="binding site" evidence="1">
    <location>
        <position position="88"/>
    </location>
    <ligand>
        <name>FAD</name>
        <dbReference type="ChEBI" id="CHEBI:57692"/>
    </ligand>
</feature>
<feature type="binding site" evidence="1">
    <location>
        <position position="123"/>
    </location>
    <ligand>
        <name>FAD</name>
        <dbReference type="ChEBI" id="CHEBI:57692"/>
    </ligand>
</feature>
<feature type="binding site" evidence="1">
    <location>
        <position position="290"/>
    </location>
    <ligand>
        <name>FAD</name>
        <dbReference type="ChEBI" id="CHEBI:57692"/>
    </ligand>
</feature>
<feature type="binding site" evidence="1">
    <location>
        <position position="331"/>
    </location>
    <ligand>
        <name>FAD</name>
        <dbReference type="ChEBI" id="CHEBI:57692"/>
    </ligand>
</feature>
<dbReference type="EC" id="1.18.1.2" evidence="1"/>
<dbReference type="EMBL" id="CP000817">
    <property type="protein sequence ID" value="ACA38405.1"/>
    <property type="status" value="ALT_INIT"/>
    <property type="molecule type" value="Genomic_DNA"/>
</dbReference>
<dbReference type="SMR" id="B1HZ05"/>
<dbReference type="EnsemblBacteria" id="ACA38405">
    <property type="protein sequence ID" value="ACA38405"/>
    <property type="gene ID" value="Bsph_0789"/>
</dbReference>
<dbReference type="KEGG" id="lsp:Bsph_0789"/>
<dbReference type="HOGENOM" id="CLU_031864_5_5_9"/>
<dbReference type="Proteomes" id="UP000002164">
    <property type="component" value="Chromosome"/>
</dbReference>
<dbReference type="GO" id="GO:0004324">
    <property type="term" value="F:ferredoxin-NADP+ reductase activity"/>
    <property type="evidence" value="ECO:0007669"/>
    <property type="project" value="UniProtKB-UniRule"/>
</dbReference>
<dbReference type="GO" id="GO:0050660">
    <property type="term" value="F:flavin adenine dinucleotide binding"/>
    <property type="evidence" value="ECO:0007669"/>
    <property type="project" value="UniProtKB-UniRule"/>
</dbReference>
<dbReference type="GO" id="GO:0050661">
    <property type="term" value="F:NADP binding"/>
    <property type="evidence" value="ECO:0007669"/>
    <property type="project" value="UniProtKB-UniRule"/>
</dbReference>
<dbReference type="Gene3D" id="3.50.50.60">
    <property type="entry name" value="FAD/NAD(P)-binding domain"/>
    <property type="match status" value="2"/>
</dbReference>
<dbReference type="HAMAP" id="MF_01685">
    <property type="entry name" value="FENR2"/>
    <property type="match status" value="1"/>
</dbReference>
<dbReference type="InterPro" id="IPR036188">
    <property type="entry name" value="FAD/NAD-bd_sf"/>
</dbReference>
<dbReference type="InterPro" id="IPR023753">
    <property type="entry name" value="FAD/NAD-binding_dom"/>
</dbReference>
<dbReference type="InterPro" id="IPR022890">
    <property type="entry name" value="Fd--NADP_Rdtase_type_2"/>
</dbReference>
<dbReference type="InterPro" id="IPR050097">
    <property type="entry name" value="Ferredoxin-NADP_redctase_2"/>
</dbReference>
<dbReference type="PANTHER" id="PTHR48105">
    <property type="entry name" value="THIOREDOXIN REDUCTASE 1-RELATED-RELATED"/>
    <property type="match status" value="1"/>
</dbReference>
<dbReference type="Pfam" id="PF07992">
    <property type="entry name" value="Pyr_redox_2"/>
    <property type="match status" value="1"/>
</dbReference>
<dbReference type="PRINTS" id="PR00368">
    <property type="entry name" value="FADPNR"/>
</dbReference>
<dbReference type="PRINTS" id="PR00469">
    <property type="entry name" value="PNDRDTASEII"/>
</dbReference>
<dbReference type="SUPFAM" id="SSF51905">
    <property type="entry name" value="FAD/NAD(P)-binding domain"/>
    <property type="match status" value="1"/>
</dbReference>